<accession>B2IS49</accession>
<gene>
    <name evidence="1" type="primary">rpsQ</name>
    <name type="ordered locus">SPCG_0227</name>
</gene>
<name>RS17_STRPS</name>
<proteinExistence type="inferred from homology"/>
<evidence type="ECO:0000255" key="1">
    <source>
        <dbReference type="HAMAP-Rule" id="MF_01345"/>
    </source>
</evidence>
<evidence type="ECO:0000305" key="2"/>
<comment type="function">
    <text evidence="1">One of the primary rRNA binding proteins, it binds specifically to the 5'-end of 16S ribosomal RNA.</text>
</comment>
<comment type="subunit">
    <text evidence="1">Part of the 30S ribosomal subunit.</text>
</comment>
<comment type="similarity">
    <text evidence="1">Belongs to the universal ribosomal protein uS17 family.</text>
</comment>
<organism>
    <name type="scientific">Streptococcus pneumoniae (strain CGSP14)</name>
    <dbReference type="NCBI Taxonomy" id="516950"/>
    <lineage>
        <taxon>Bacteria</taxon>
        <taxon>Bacillati</taxon>
        <taxon>Bacillota</taxon>
        <taxon>Bacilli</taxon>
        <taxon>Lactobacillales</taxon>
        <taxon>Streptococcaceae</taxon>
        <taxon>Streptococcus</taxon>
    </lineage>
</organism>
<keyword id="KW-0687">Ribonucleoprotein</keyword>
<keyword id="KW-0689">Ribosomal protein</keyword>
<keyword id="KW-0694">RNA-binding</keyword>
<keyword id="KW-0699">rRNA-binding</keyword>
<dbReference type="EMBL" id="CP001033">
    <property type="protein sequence ID" value="ACB89479.1"/>
    <property type="molecule type" value="Genomic_DNA"/>
</dbReference>
<dbReference type="RefSeq" id="WP_000440801.1">
    <property type="nucleotide sequence ID" value="NC_010582.1"/>
</dbReference>
<dbReference type="SMR" id="B2IS49"/>
<dbReference type="GeneID" id="93920913"/>
<dbReference type="KEGG" id="spw:SPCG_0227"/>
<dbReference type="HOGENOM" id="CLU_073626_1_0_9"/>
<dbReference type="GO" id="GO:0022627">
    <property type="term" value="C:cytosolic small ribosomal subunit"/>
    <property type="evidence" value="ECO:0007669"/>
    <property type="project" value="TreeGrafter"/>
</dbReference>
<dbReference type="GO" id="GO:0019843">
    <property type="term" value="F:rRNA binding"/>
    <property type="evidence" value="ECO:0007669"/>
    <property type="project" value="UniProtKB-UniRule"/>
</dbReference>
<dbReference type="GO" id="GO:0003735">
    <property type="term" value="F:structural constituent of ribosome"/>
    <property type="evidence" value="ECO:0007669"/>
    <property type="project" value="InterPro"/>
</dbReference>
<dbReference type="GO" id="GO:0006412">
    <property type="term" value="P:translation"/>
    <property type="evidence" value="ECO:0007669"/>
    <property type="project" value="UniProtKB-UniRule"/>
</dbReference>
<dbReference type="CDD" id="cd00364">
    <property type="entry name" value="Ribosomal_uS17"/>
    <property type="match status" value="1"/>
</dbReference>
<dbReference type="FunFam" id="2.40.50.140:FF:000026">
    <property type="entry name" value="30S ribosomal protein S17"/>
    <property type="match status" value="1"/>
</dbReference>
<dbReference type="Gene3D" id="2.40.50.140">
    <property type="entry name" value="Nucleic acid-binding proteins"/>
    <property type="match status" value="1"/>
</dbReference>
<dbReference type="HAMAP" id="MF_01345_B">
    <property type="entry name" value="Ribosomal_uS17_B"/>
    <property type="match status" value="1"/>
</dbReference>
<dbReference type="InterPro" id="IPR012340">
    <property type="entry name" value="NA-bd_OB-fold"/>
</dbReference>
<dbReference type="InterPro" id="IPR000266">
    <property type="entry name" value="Ribosomal_uS17"/>
</dbReference>
<dbReference type="InterPro" id="IPR019984">
    <property type="entry name" value="Ribosomal_uS17_bact/chlr"/>
</dbReference>
<dbReference type="InterPro" id="IPR019979">
    <property type="entry name" value="Ribosomal_uS17_CS"/>
</dbReference>
<dbReference type="NCBIfam" id="NF004123">
    <property type="entry name" value="PRK05610.1"/>
    <property type="match status" value="1"/>
</dbReference>
<dbReference type="NCBIfam" id="TIGR03635">
    <property type="entry name" value="uS17_bact"/>
    <property type="match status" value="1"/>
</dbReference>
<dbReference type="PANTHER" id="PTHR10744">
    <property type="entry name" value="40S RIBOSOMAL PROTEIN S11 FAMILY MEMBER"/>
    <property type="match status" value="1"/>
</dbReference>
<dbReference type="PANTHER" id="PTHR10744:SF1">
    <property type="entry name" value="SMALL RIBOSOMAL SUBUNIT PROTEIN US17M"/>
    <property type="match status" value="1"/>
</dbReference>
<dbReference type="Pfam" id="PF00366">
    <property type="entry name" value="Ribosomal_S17"/>
    <property type="match status" value="1"/>
</dbReference>
<dbReference type="PRINTS" id="PR00973">
    <property type="entry name" value="RIBOSOMALS17"/>
</dbReference>
<dbReference type="SUPFAM" id="SSF50249">
    <property type="entry name" value="Nucleic acid-binding proteins"/>
    <property type="match status" value="1"/>
</dbReference>
<dbReference type="PROSITE" id="PS00056">
    <property type="entry name" value="RIBOSOMAL_S17"/>
    <property type="match status" value="1"/>
</dbReference>
<protein>
    <recommendedName>
        <fullName evidence="1">Small ribosomal subunit protein uS17</fullName>
    </recommendedName>
    <alternativeName>
        <fullName evidence="2">30S ribosomal protein S17</fullName>
    </alternativeName>
</protein>
<reference key="1">
    <citation type="journal article" date="2009" name="BMC Genomics">
        <title>Genome evolution driven by host adaptations results in a more virulent and antimicrobial-resistant Streptococcus pneumoniae serotype 14.</title>
        <authorList>
            <person name="Ding F."/>
            <person name="Tang P."/>
            <person name="Hsu M.-H."/>
            <person name="Cui P."/>
            <person name="Hu S."/>
            <person name="Yu J."/>
            <person name="Chiu C.-H."/>
        </authorList>
    </citation>
    <scope>NUCLEOTIDE SEQUENCE [LARGE SCALE GENOMIC DNA]</scope>
    <source>
        <strain>CGSP14</strain>
    </source>
</reference>
<feature type="chain" id="PRO_1000143311" description="Small ribosomal subunit protein uS17">
    <location>
        <begin position="1"/>
        <end position="86"/>
    </location>
</feature>
<sequence length="86" mass="10011">MERNNRKVLVGRVVSDKMDKTITVVVETKRNHPVYGKRINYSKKYKAHDENNVAKEGDIVRIMETRPLSATKRFRLVEVVEEAVII</sequence>